<organism>
    <name type="scientific">Trieres chinensis</name>
    <name type="common">Marine centric diatom</name>
    <name type="synonym">Odontella sinensis</name>
    <dbReference type="NCBI Taxonomy" id="1514140"/>
    <lineage>
        <taxon>Eukaryota</taxon>
        <taxon>Sar</taxon>
        <taxon>Stramenopiles</taxon>
        <taxon>Ochrophyta</taxon>
        <taxon>Bacillariophyta</taxon>
        <taxon>Mediophyceae</taxon>
        <taxon>Biddulphiophycidae</taxon>
        <taxon>Eupodiscales</taxon>
        <taxon>Parodontellaceae</taxon>
        <taxon>Trieres</taxon>
    </lineage>
</organism>
<protein>
    <recommendedName>
        <fullName evidence="1">Cytochrome c biogenesis protein CcsA</fullName>
    </recommendedName>
</protein>
<gene>
    <name evidence="1" type="primary">ccsA</name>
</gene>
<sequence>MDWDIIQNLSSNLVFGILLFAMTIYWISLSFFKWTKNLSQVGKISAIVANILLFFILGSRWIVAGYFPLSNLYESLLFLTWTLLTIYLYVEFKTKSKLVGAILIPVALLINGFANLTLSVDMQKSSPLVPALQSNWLMLHVSMMMLSYGTLIMGSLLCILFLVISKYQDIDLQILDESSLPLYNIMLDYYEAKLFSPSDEVSELGKLKLLQSLDNWSYRIIGLGFPFLTIGIIAGGVWANEAWGSYWSWDPKETWALITWIVFATYLHSRITKGWEGKKTAILGGLGFFVIWICYLGVNFLGKGLHSYGWLS</sequence>
<accession>P49523</accession>
<feature type="chain" id="PRO_0000201609" description="Cytochrome c biogenesis protein CcsA">
    <location>
        <begin position="1"/>
        <end position="312"/>
    </location>
</feature>
<feature type="transmembrane region" description="Helical" evidence="1">
    <location>
        <begin position="12"/>
        <end position="32"/>
    </location>
</feature>
<feature type="transmembrane region" description="Helical" evidence="1">
    <location>
        <begin position="47"/>
        <end position="67"/>
    </location>
</feature>
<feature type="transmembrane region" description="Helical" evidence="1">
    <location>
        <begin position="72"/>
        <end position="92"/>
    </location>
</feature>
<feature type="transmembrane region" description="Helical" evidence="1">
    <location>
        <begin position="98"/>
        <end position="118"/>
    </location>
</feature>
<feature type="transmembrane region" description="Helical" evidence="1">
    <location>
        <begin position="144"/>
        <end position="164"/>
    </location>
</feature>
<feature type="transmembrane region" description="Helical" evidence="1">
    <location>
        <begin position="220"/>
        <end position="240"/>
    </location>
</feature>
<feature type="transmembrane region" description="Helical" evidence="1">
    <location>
        <begin position="254"/>
        <end position="271"/>
    </location>
</feature>
<feature type="transmembrane region" description="Helical" evidence="1">
    <location>
        <begin position="281"/>
        <end position="301"/>
    </location>
</feature>
<reference key="1">
    <citation type="journal article" date="1995" name="Plant Mol. Biol. Rep.">
        <title>The chloroplast genome of a chlorophyll a+c-containing alga, Odontella sinensis.</title>
        <authorList>
            <person name="Kowallik K.V."/>
            <person name="Stoebe B."/>
            <person name="Schaffran I."/>
            <person name="Kroth-Pancic P."/>
            <person name="Freier U."/>
        </authorList>
    </citation>
    <scope>NUCLEOTIDE SEQUENCE [LARGE SCALE GENOMIC DNA]</scope>
</reference>
<proteinExistence type="inferred from homology"/>
<name>CCSA_TRICV</name>
<geneLocation type="chloroplast"/>
<evidence type="ECO:0000255" key="1">
    <source>
        <dbReference type="HAMAP-Rule" id="MF_01391"/>
    </source>
</evidence>
<dbReference type="EMBL" id="Z67753">
    <property type="protein sequence ID" value="CAA91615.1"/>
    <property type="molecule type" value="Genomic_DNA"/>
</dbReference>
<dbReference type="PIR" id="S78242">
    <property type="entry name" value="S78242"/>
</dbReference>
<dbReference type="RefSeq" id="NP_043583.1">
    <property type="nucleotide sequence ID" value="NC_001713.1"/>
</dbReference>
<dbReference type="SMR" id="P49523"/>
<dbReference type="GeneID" id="801719"/>
<dbReference type="GO" id="GO:0009535">
    <property type="term" value="C:chloroplast thylakoid membrane"/>
    <property type="evidence" value="ECO:0007669"/>
    <property type="project" value="UniProtKB-SubCell"/>
</dbReference>
<dbReference type="GO" id="GO:0005886">
    <property type="term" value="C:plasma membrane"/>
    <property type="evidence" value="ECO:0007669"/>
    <property type="project" value="TreeGrafter"/>
</dbReference>
<dbReference type="GO" id="GO:0020037">
    <property type="term" value="F:heme binding"/>
    <property type="evidence" value="ECO:0007669"/>
    <property type="project" value="InterPro"/>
</dbReference>
<dbReference type="GO" id="GO:0017004">
    <property type="term" value="P:cytochrome complex assembly"/>
    <property type="evidence" value="ECO:0007669"/>
    <property type="project" value="UniProtKB-UniRule"/>
</dbReference>
<dbReference type="HAMAP" id="MF_01391">
    <property type="entry name" value="CytC_CcsA"/>
    <property type="match status" value="1"/>
</dbReference>
<dbReference type="InterPro" id="IPR002541">
    <property type="entry name" value="Cyt_c_assembly"/>
</dbReference>
<dbReference type="InterPro" id="IPR017562">
    <property type="entry name" value="Cyt_c_biogenesis_CcsA"/>
</dbReference>
<dbReference type="InterPro" id="IPR045062">
    <property type="entry name" value="Cyt_c_biogenesis_CcsA/CcmC"/>
</dbReference>
<dbReference type="NCBIfam" id="TIGR03144">
    <property type="entry name" value="cytochr_II_ccsB"/>
    <property type="match status" value="1"/>
</dbReference>
<dbReference type="PANTHER" id="PTHR30071:SF1">
    <property type="entry name" value="CYTOCHROME B_B6 PROTEIN-RELATED"/>
    <property type="match status" value="1"/>
</dbReference>
<dbReference type="PANTHER" id="PTHR30071">
    <property type="entry name" value="HEME EXPORTER PROTEIN C"/>
    <property type="match status" value="1"/>
</dbReference>
<dbReference type="Pfam" id="PF01578">
    <property type="entry name" value="Cytochrom_C_asm"/>
    <property type="match status" value="1"/>
</dbReference>
<keyword id="KW-0150">Chloroplast</keyword>
<keyword id="KW-0201">Cytochrome c-type biogenesis</keyword>
<keyword id="KW-0472">Membrane</keyword>
<keyword id="KW-0934">Plastid</keyword>
<keyword id="KW-0793">Thylakoid</keyword>
<keyword id="KW-0812">Transmembrane</keyword>
<keyword id="KW-1133">Transmembrane helix</keyword>
<comment type="function">
    <text evidence="1">Required during biogenesis of c-type cytochromes (cytochrome c6 and cytochrome f) at the step of heme attachment.</text>
</comment>
<comment type="subunit">
    <text evidence="1">May interact with Ccs1.</text>
</comment>
<comment type="subcellular location">
    <subcellularLocation>
        <location evidence="1">Plastid</location>
        <location evidence="1">Chloroplast thylakoid membrane</location>
        <topology evidence="1">Multi-pass membrane protein</topology>
    </subcellularLocation>
</comment>
<comment type="similarity">
    <text evidence="1">Belongs to the CcmF/CycK/Ccl1/NrfE/CcsA family.</text>
</comment>